<evidence type="ECO:0000255" key="1">
    <source>
        <dbReference type="HAMAP-Rule" id="MF_00145"/>
    </source>
</evidence>
<accession>Q8L1Z8</accession>
<sequence>MGFRTLDDVDVTGKRVLVRVDFNVPMAQGKVCDDTRLKRHKETLLELQKRGAKLILLSHCGRPKGQVEPEFSLHPVVQVLEKIINQPVNFASDCIGVAVQTAVEALQNGGILLLENVRFHSGEEKNAGSFAEALAHNGDLYVNDAFSVSHRAHASVEGITHFLPSYAGRSLQCELQALEKGLGKPERPVIAIVGGAKVSSKLFVLNHLVKKVDYLVIGGGMANSFLAAQGVCVGKSLCEHALIETVKKVIEKARECQCTLLLPVDAIVGFRFEKDAPHRLYDIGDIPEDGMILDVGTRSIAHINAVIDKAATLVWNGPLGVFEMSPFDQGTIAVARHAAELSLTGKLVSIAGGGDTVFALNHAGVADDFTYLSTAGGAFLEWMEGKMLPGILALTQA</sequence>
<dbReference type="EC" id="2.7.2.3" evidence="1"/>
<dbReference type="EMBL" id="AY074772">
    <property type="protein sequence ID" value="AAL74285.1"/>
    <property type="molecule type" value="Genomic_DNA"/>
</dbReference>
<dbReference type="EMBL" id="BX897699">
    <property type="protein sequence ID" value="CAF28270.1"/>
    <property type="molecule type" value="Genomic_DNA"/>
</dbReference>
<dbReference type="RefSeq" id="WP_011181275.1">
    <property type="nucleotide sequence ID" value="NZ_LRIJ02000001.1"/>
</dbReference>
<dbReference type="SMR" id="Q8L1Z8"/>
<dbReference type="PaxDb" id="283166-BH15070"/>
<dbReference type="EnsemblBacteria" id="CAF28270">
    <property type="protein sequence ID" value="CAF28270"/>
    <property type="gene ID" value="BH15070"/>
</dbReference>
<dbReference type="KEGG" id="bhe:BH15070"/>
<dbReference type="eggNOG" id="COG0126">
    <property type="taxonomic scope" value="Bacteria"/>
</dbReference>
<dbReference type="UniPathway" id="UPA00109">
    <property type="reaction ID" value="UER00185"/>
</dbReference>
<dbReference type="Proteomes" id="UP000000421">
    <property type="component" value="Chromosome"/>
</dbReference>
<dbReference type="GO" id="GO:0005829">
    <property type="term" value="C:cytosol"/>
    <property type="evidence" value="ECO:0007669"/>
    <property type="project" value="TreeGrafter"/>
</dbReference>
<dbReference type="GO" id="GO:0043531">
    <property type="term" value="F:ADP binding"/>
    <property type="evidence" value="ECO:0007669"/>
    <property type="project" value="TreeGrafter"/>
</dbReference>
<dbReference type="GO" id="GO:0005524">
    <property type="term" value="F:ATP binding"/>
    <property type="evidence" value="ECO:0007669"/>
    <property type="project" value="UniProtKB-KW"/>
</dbReference>
<dbReference type="GO" id="GO:0004618">
    <property type="term" value="F:phosphoglycerate kinase activity"/>
    <property type="evidence" value="ECO:0007669"/>
    <property type="project" value="UniProtKB-UniRule"/>
</dbReference>
<dbReference type="GO" id="GO:0006094">
    <property type="term" value="P:gluconeogenesis"/>
    <property type="evidence" value="ECO:0007669"/>
    <property type="project" value="TreeGrafter"/>
</dbReference>
<dbReference type="GO" id="GO:0006096">
    <property type="term" value="P:glycolytic process"/>
    <property type="evidence" value="ECO:0007669"/>
    <property type="project" value="UniProtKB-UniRule"/>
</dbReference>
<dbReference type="FunFam" id="3.40.50.1260:FF:000001">
    <property type="entry name" value="Phosphoglycerate kinase"/>
    <property type="match status" value="1"/>
</dbReference>
<dbReference type="FunFam" id="3.40.50.1260:FF:000006">
    <property type="entry name" value="Phosphoglycerate kinase"/>
    <property type="match status" value="1"/>
</dbReference>
<dbReference type="Gene3D" id="3.40.50.1260">
    <property type="entry name" value="Phosphoglycerate kinase, N-terminal domain"/>
    <property type="match status" value="2"/>
</dbReference>
<dbReference type="HAMAP" id="MF_00145">
    <property type="entry name" value="Phosphoglyc_kinase"/>
    <property type="match status" value="1"/>
</dbReference>
<dbReference type="InterPro" id="IPR001576">
    <property type="entry name" value="Phosphoglycerate_kinase"/>
</dbReference>
<dbReference type="InterPro" id="IPR015911">
    <property type="entry name" value="Phosphoglycerate_kinase_CS"/>
</dbReference>
<dbReference type="InterPro" id="IPR015824">
    <property type="entry name" value="Phosphoglycerate_kinase_N"/>
</dbReference>
<dbReference type="InterPro" id="IPR036043">
    <property type="entry name" value="Phosphoglycerate_kinase_sf"/>
</dbReference>
<dbReference type="PANTHER" id="PTHR11406">
    <property type="entry name" value="PHOSPHOGLYCERATE KINASE"/>
    <property type="match status" value="1"/>
</dbReference>
<dbReference type="PANTHER" id="PTHR11406:SF23">
    <property type="entry name" value="PHOSPHOGLYCERATE KINASE 1, CHLOROPLASTIC-RELATED"/>
    <property type="match status" value="1"/>
</dbReference>
<dbReference type="Pfam" id="PF00162">
    <property type="entry name" value="PGK"/>
    <property type="match status" value="1"/>
</dbReference>
<dbReference type="PIRSF" id="PIRSF000724">
    <property type="entry name" value="Pgk"/>
    <property type="match status" value="1"/>
</dbReference>
<dbReference type="PRINTS" id="PR00477">
    <property type="entry name" value="PHGLYCKINASE"/>
</dbReference>
<dbReference type="SUPFAM" id="SSF53748">
    <property type="entry name" value="Phosphoglycerate kinase"/>
    <property type="match status" value="1"/>
</dbReference>
<dbReference type="PROSITE" id="PS00111">
    <property type="entry name" value="PGLYCERATE_KINASE"/>
    <property type="match status" value="1"/>
</dbReference>
<gene>
    <name evidence="1" type="primary">pgk</name>
    <name type="ordered locus">BH15070</name>
</gene>
<proteinExistence type="inferred from homology"/>
<protein>
    <recommendedName>
        <fullName evidence="1">Phosphoglycerate kinase</fullName>
        <ecNumber evidence="1">2.7.2.3</ecNumber>
    </recommendedName>
</protein>
<keyword id="KW-0067">ATP-binding</keyword>
<keyword id="KW-0963">Cytoplasm</keyword>
<keyword id="KW-0324">Glycolysis</keyword>
<keyword id="KW-0418">Kinase</keyword>
<keyword id="KW-0547">Nucleotide-binding</keyword>
<keyword id="KW-0808">Transferase</keyword>
<name>PGK_BARHE</name>
<reference key="1">
    <citation type="journal article" date="2002" name="Proc. Natl. Acad. Sci. U.S.A.">
        <title>The global phylogeny of glycolytic enzymes.</title>
        <authorList>
            <person name="Canback B."/>
            <person name="Andersson S.G.E."/>
            <person name="Kurland C.G."/>
        </authorList>
    </citation>
    <scope>NUCLEOTIDE SEQUENCE [GENOMIC DNA]</scope>
    <source>
        <strain>ATCC 49882 / DSM 28221 / CCUG 30454 / Houston 1</strain>
    </source>
</reference>
<reference key="2">
    <citation type="journal article" date="2004" name="Proc. Natl. Acad. Sci. U.S.A.">
        <title>The louse-borne human pathogen Bartonella quintana is a genomic derivative of the zoonotic agent Bartonella henselae.</title>
        <authorList>
            <person name="Alsmark U.C.M."/>
            <person name="Frank A.C."/>
            <person name="Karlberg E.O."/>
            <person name="Legault B.-A."/>
            <person name="Ardell D.H."/>
            <person name="Canbaeck B."/>
            <person name="Eriksson A.-S."/>
            <person name="Naeslund A.K."/>
            <person name="Handley S.A."/>
            <person name="Huvet M."/>
            <person name="La Scola B."/>
            <person name="Holmberg M."/>
            <person name="Andersson S.G.E."/>
        </authorList>
    </citation>
    <scope>NUCLEOTIDE SEQUENCE [LARGE SCALE GENOMIC DNA]</scope>
    <source>
        <strain>ATCC 49882 / DSM 28221 / CCUG 30454 / Houston 1</strain>
    </source>
</reference>
<feature type="chain" id="PRO_0000145907" description="Phosphoglycerate kinase">
    <location>
        <begin position="1"/>
        <end position="397"/>
    </location>
</feature>
<feature type="binding site" evidence="1">
    <location>
        <begin position="21"/>
        <end position="23"/>
    </location>
    <ligand>
        <name>substrate</name>
    </ligand>
</feature>
<feature type="binding site" evidence="1">
    <location>
        <position position="36"/>
    </location>
    <ligand>
        <name>substrate</name>
    </ligand>
</feature>
<feature type="binding site" evidence="1">
    <location>
        <begin position="59"/>
        <end position="62"/>
    </location>
    <ligand>
        <name>substrate</name>
    </ligand>
</feature>
<feature type="binding site" evidence="1">
    <location>
        <position position="118"/>
    </location>
    <ligand>
        <name>substrate</name>
    </ligand>
</feature>
<feature type="binding site" evidence="1">
    <location>
        <position position="151"/>
    </location>
    <ligand>
        <name>substrate</name>
    </ligand>
</feature>
<feature type="binding site" evidence="1">
    <location>
        <position position="201"/>
    </location>
    <ligand>
        <name>ATP</name>
        <dbReference type="ChEBI" id="CHEBI:30616"/>
    </ligand>
</feature>
<feature type="binding site" evidence="1">
    <location>
        <position position="323"/>
    </location>
    <ligand>
        <name>ATP</name>
        <dbReference type="ChEBI" id="CHEBI:30616"/>
    </ligand>
</feature>
<feature type="binding site" evidence="1">
    <location>
        <begin position="353"/>
        <end position="356"/>
    </location>
    <ligand>
        <name>ATP</name>
        <dbReference type="ChEBI" id="CHEBI:30616"/>
    </ligand>
</feature>
<comment type="catalytic activity">
    <reaction evidence="1">
        <text>(2R)-3-phosphoglycerate + ATP = (2R)-3-phospho-glyceroyl phosphate + ADP</text>
        <dbReference type="Rhea" id="RHEA:14801"/>
        <dbReference type="ChEBI" id="CHEBI:30616"/>
        <dbReference type="ChEBI" id="CHEBI:57604"/>
        <dbReference type="ChEBI" id="CHEBI:58272"/>
        <dbReference type="ChEBI" id="CHEBI:456216"/>
        <dbReference type="EC" id="2.7.2.3"/>
    </reaction>
</comment>
<comment type="pathway">
    <text evidence="1">Carbohydrate degradation; glycolysis; pyruvate from D-glyceraldehyde 3-phosphate: step 2/5.</text>
</comment>
<comment type="subunit">
    <text evidence="1">Monomer.</text>
</comment>
<comment type="subcellular location">
    <subcellularLocation>
        <location evidence="1">Cytoplasm</location>
    </subcellularLocation>
</comment>
<comment type="similarity">
    <text evidence="1">Belongs to the phosphoglycerate kinase family.</text>
</comment>
<organism>
    <name type="scientific">Bartonella henselae (strain ATCC 49882 / DSM 28221 / CCUG 30454 / Houston 1)</name>
    <name type="common">Rochalimaea henselae</name>
    <dbReference type="NCBI Taxonomy" id="283166"/>
    <lineage>
        <taxon>Bacteria</taxon>
        <taxon>Pseudomonadati</taxon>
        <taxon>Pseudomonadota</taxon>
        <taxon>Alphaproteobacteria</taxon>
        <taxon>Hyphomicrobiales</taxon>
        <taxon>Bartonellaceae</taxon>
        <taxon>Bartonella</taxon>
    </lineage>
</organism>